<accession>Q9DBI0</accession>
<accession>A8W478</accession>
<accession>A8W479</accession>
<accession>Q3KN88</accession>
<accession>Q6PF94</accession>
<dbReference type="EC" id="3.4.21.-"/>
<dbReference type="EMBL" id="AY240929">
    <property type="protein sequence ID" value="AAP69827.1"/>
    <property type="molecule type" value="mRNA"/>
</dbReference>
<dbReference type="EMBL" id="EU190436">
    <property type="protein sequence ID" value="ABW38782.1"/>
    <property type="molecule type" value="mRNA"/>
</dbReference>
<dbReference type="EMBL" id="EU190437">
    <property type="protein sequence ID" value="ABW38783.1"/>
    <property type="molecule type" value="mRNA"/>
</dbReference>
<dbReference type="EMBL" id="AK004939">
    <property type="protein sequence ID" value="BAB23684.2"/>
    <property type="molecule type" value="mRNA"/>
</dbReference>
<dbReference type="EMBL" id="AL590144">
    <property type="status" value="NOT_ANNOTATED_CDS"/>
    <property type="molecule type" value="Genomic_DNA"/>
</dbReference>
<dbReference type="EMBL" id="BC029645">
    <property type="protein sequence ID" value="AAH29645.2"/>
    <property type="molecule type" value="mRNA"/>
</dbReference>
<dbReference type="EMBL" id="BC057674">
    <property type="protein sequence ID" value="AAH57674.1"/>
    <property type="status" value="ALT_INIT"/>
    <property type="molecule type" value="mRNA"/>
</dbReference>
<dbReference type="EMBL" id="BK000520">
    <property type="protein sequence ID" value="DAA00246.1"/>
    <property type="molecule type" value="Genomic_DNA"/>
</dbReference>
<dbReference type="CCDS" id="CCDS37133.1">
    <molecule id="Q9DBI0-1"/>
</dbReference>
<dbReference type="RefSeq" id="NP_082178.2">
    <molecule id="Q9DBI0-1"/>
    <property type="nucleotide sequence ID" value="NM_027902.2"/>
</dbReference>
<dbReference type="RefSeq" id="XP_006521479.1">
    <property type="nucleotide sequence ID" value="XM_006521416.2"/>
</dbReference>
<dbReference type="SMR" id="Q9DBI0"/>
<dbReference type="BioGRID" id="214901">
    <property type="interactions" value="11"/>
</dbReference>
<dbReference type="FunCoup" id="Q9DBI0">
    <property type="interactions" value="178"/>
</dbReference>
<dbReference type="IntAct" id="Q9DBI0">
    <property type="interactions" value="1"/>
</dbReference>
<dbReference type="STRING" id="10090.ENSMUSP00000017086"/>
<dbReference type="MEROPS" id="S01.308"/>
<dbReference type="GlyCosmos" id="Q9DBI0">
    <property type="glycosylation" value="7 sites, No reported glycans"/>
</dbReference>
<dbReference type="GlyGen" id="Q9DBI0">
    <property type="glycosylation" value="7 sites"/>
</dbReference>
<dbReference type="PhosphoSitePlus" id="Q9DBI0"/>
<dbReference type="SwissPalm" id="Q9DBI0"/>
<dbReference type="PaxDb" id="10090-ENSMUSP00000017086"/>
<dbReference type="PeptideAtlas" id="Q9DBI0"/>
<dbReference type="ProteomicsDB" id="260709">
    <molecule id="Q9DBI0-1"/>
</dbReference>
<dbReference type="ProteomicsDB" id="260710">
    <molecule id="Q9DBI0-2"/>
</dbReference>
<dbReference type="ProteomicsDB" id="260711">
    <molecule id="Q9DBI0-3"/>
</dbReference>
<dbReference type="Antibodypedia" id="25860">
    <property type="antibodies" value="146 antibodies from 22 providers"/>
</dbReference>
<dbReference type="DNASU" id="71753"/>
<dbReference type="Ensembl" id="ENSMUST00000017086.5">
    <molecule id="Q9DBI0-1"/>
    <property type="protein sequence ID" value="ENSMUSP00000017086.4"/>
    <property type="gene ID" value="ENSMUSG00000016942.7"/>
</dbReference>
<dbReference type="Ensembl" id="ENSMUST00000229516.2">
    <molecule id="Q9DBI0-2"/>
    <property type="protein sequence ID" value="ENSMUSP00000155355.2"/>
    <property type="gene ID" value="ENSMUSG00000016942.7"/>
</dbReference>
<dbReference type="Ensembl" id="ENSMUST00000230159.2">
    <molecule id="Q9DBI0-3"/>
    <property type="protein sequence ID" value="ENSMUSP00000155549.2"/>
    <property type="gene ID" value="ENSMUSG00000016942.7"/>
</dbReference>
<dbReference type="GeneID" id="71753"/>
<dbReference type="KEGG" id="mmu:71753"/>
<dbReference type="UCSC" id="uc007wpi.1">
    <molecule id="Q9DBI0-1"/>
    <property type="organism name" value="mouse"/>
</dbReference>
<dbReference type="UCSC" id="uc011zvt.1">
    <molecule id="Q9DBI0-2"/>
    <property type="organism name" value="mouse"/>
</dbReference>
<dbReference type="AGR" id="MGI:1919003"/>
<dbReference type="CTD" id="164656"/>
<dbReference type="MGI" id="MGI:1919003">
    <property type="gene designation" value="Tmprss6"/>
</dbReference>
<dbReference type="VEuPathDB" id="HostDB:ENSMUSG00000016942"/>
<dbReference type="eggNOG" id="KOG3627">
    <property type="taxonomic scope" value="Eukaryota"/>
</dbReference>
<dbReference type="GeneTree" id="ENSGT00940000160104"/>
<dbReference type="HOGENOM" id="CLU_006842_19_3_1"/>
<dbReference type="InParanoid" id="Q9DBI0"/>
<dbReference type="OMA" id="WFALQIP"/>
<dbReference type="OrthoDB" id="93664at2759"/>
<dbReference type="PhylomeDB" id="Q9DBI0"/>
<dbReference type="TreeFam" id="TF330647"/>
<dbReference type="BRENDA" id="3.4.21.109">
    <property type="organism ID" value="3474"/>
</dbReference>
<dbReference type="Reactome" id="R-MMU-1442490">
    <property type="pathway name" value="Collagen degradation"/>
</dbReference>
<dbReference type="Reactome" id="R-MMU-1474228">
    <property type="pathway name" value="Degradation of the extracellular matrix"/>
</dbReference>
<dbReference type="BioGRID-ORCS" id="71753">
    <property type="hits" value="0 hits in 79 CRISPR screens"/>
</dbReference>
<dbReference type="ChiTaRS" id="Tmprss6">
    <property type="organism name" value="mouse"/>
</dbReference>
<dbReference type="PRO" id="PR:Q9DBI0"/>
<dbReference type="Proteomes" id="UP000000589">
    <property type="component" value="Chromosome 15"/>
</dbReference>
<dbReference type="RNAct" id="Q9DBI0">
    <property type="molecule type" value="protein"/>
</dbReference>
<dbReference type="Bgee" id="ENSMUSG00000016942">
    <property type="expression patterns" value="Expressed in left lobe of liver and 86 other cell types or tissues"/>
</dbReference>
<dbReference type="ExpressionAtlas" id="Q9DBI0">
    <property type="expression patterns" value="baseline and differential"/>
</dbReference>
<dbReference type="GO" id="GO:0005615">
    <property type="term" value="C:extracellular space"/>
    <property type="evidence" value="ECO:0000250"/>
    <property type="project" value="UniProtKB"/>
</dbReference>
<dbReference type="GO" id="GO:0016020">
    <property type="term" value="C:membrane"/>
    <property type="evidence" value="ECO:0000250"/>
    <property type="project" value="UniProtKB"/>
</dbReference>
<dbReference type="GO" id="GO:0005886">
    <property type="term" value="C:plasma membrane"/>
    <property type="evidence" value="ECO:0000314"/>
    <property type="project" value="MGI"/>
</dbReference>
<dbReference type="GO" id="GO:0004252">
    <property type="term" value="F:serine-type endopeptidase activity"/>
    <property type="evidence" value="ECO:0000250"/>
    <property type="project" value="UniProtKB"/>
</dbReference>
<dbReference type="GO" id="GO:0030509">
    <property type="term" value="P:BMP signaling pathway"/>
    <property type="evidence" value="ECO:0000316"/>
    <property type="project" value="MGI"/>
</dbReference>
<dbReference type="GO" id="GO:0042730">
    <property type="term" value="P:fibrinolysis"/>
    <property type="evidence" value="ECO:0000250"/>
    <property type="project" value="UniProtKB"/>
</dbReference>
<dbReference type="GO" id="GO:0006879">
    <property type="term" value="P:intracellular iron ion homeostasis"/>
    <property type="evidence" value="ECO:0000315"/>
    <property type="project" value="BHF-UCL"/>
</dbReference>
<dbReference type="GO" id="GO:0033619">
    <property type="term" value="P:membrane protein proteolysis"/>
    <property type="evidence" value="ECO:0000250"/>
    <property type="project" value="UniProtKB"/>
</dbReference>
<dbReference type="GO" id="GO:0060586">
    <property type="term" value="P:multicellular organismal-level iron ion homeostasis"/>
    <property type="evidence" value="ECO:0000315"/>
    <property type="project" value="MGI"/>
</dbReference>
<dbReference type="GO" id="GO:0030514">
    <property type="term" value="P:negative regulation of BMP signaling pathway"/>
    <property type="evidence" value="ECO:0000316"/>
    <property type="project" value="MGI"/>
</dbReference>
<dbReference type="GO" id="GO:0045892">
    <property type="term" value="P:negative regulation of DNA-templated transcription"/>
    <property type="evidence" value="ECO:0000250"/>
    <property type="project" value="UniProtKB"/>
</dbReference>
<dbReference type="GO" id="GO:0000122">
    <property type="term" value="P:negative regulation of transcription by RNA polymerase II"/>
    <property type="evidence" value="ECO:0000315"/>
    <property type="project" value="BHF-UCL"/>
</dbReference>
<dbReference type="GO" id="GO:0045944">
    <property type="term" value="P:positive regulation of transcription by RNA polymerase II"/>
    <property type="evidence" value="ECO:0000315"/>
    <property type="project" value="BHF-UCL"/>
</dbReference>
<dbReference type="GO" id="GO:0006508">
    <property type="term" value="P:proteolysis"/>
    <property type="evidence" value="ECO:0000250"/>
    <property type="project" value="UniProtKB"/>
</dbReference>
<dbReference type="GO" id="GO:0097264">
    <property type="term" value="P:self proteolysis"/>
    <property type="evidence" value="ECO:0000250"/>
    <property type="project" value="UniProtKB"/>
</dbReference>
<dbReference type="CDD" id="cd00112">
    <property type="entry name" value="LDLa"/>
    <property type="match status" value="3"/>
</dbReference>
<dbReference type="CDD" id="cd00190">
    <property type="entry name" value="Tryp_SPc"/>
    <property type="match status" value="1"/>
</dbReference>
<dbReference type="FunFam" id="2.40.10.10:FF:000003">
    <property type="entry name" value="Transmembrane serine protease 3"/>
    <property type="match status" value="1"/>
</dbReference>
<dbReference type="FunFam" id="2.60.120.290:FF:000027">
    <property type="entry name" value="Transmembrane serine protease 6"/>
    <property type="match status" value="1"/>
</dbReference>
<dbReference type="FunFam" id="3.30.70.960:FF:000004">
    <property type="entry name" value="Transmembrane serine protease 6"/>
    <property type="match status" value="1"/>
</dbReference>
<dbReference type="FunFam" id="4.10.400.10:FF:000096">
    <property type="entry name" value="Transmembrane serine protease 6"/>
    <property type="match status" value="1"/>
</dbReference>
<dbReference type="FunFam" id="4.10.400.10:FF:000097">
    <property type="entry name" value="Transmembrane serine protease 6"/>
    <property type="match status" value="1"/>
</dbReference>
<dbReference type="Gene3D" id="4.10.400.10">
    <property type="entry name" value="Low-density Lipoprotein Receptor"/>
    <property type="match status" value="3"/>
</dbReference>
<dbReference type="Gene3D" id="3.30.70.960">
    <property type="entry name" value="SEA domain"/>
    <property type="match status" value="1"/>
</dbReference>
<dbReference type="Gene3D" id="2.60.120.290">
    <property type="entry name" value="Spermadhesin, CUB domain"/>
    <property type="match status" value="1"/>
</dbReference>
<dbReference type="Gene3D" id="2.40.10.10">
    <property type="entry name" value="Trypsin-like serine proteases"/>
    <property type="match status" value="1"/>
</dbReference>
<dbReference type="InterPro" id="IPR000859">
    <property type="entry name" value="CUB_dom"/>
</dbReference>
<dbReference type="InterPro" id="IPR036055">
    <property type="entry name" value="LDL_receptor-like_sf"/>
</dbReference>
<dbReference type="InterPro" id="IPR002172">
    <property type="entry name" value="LDrepeatLR_classA_rpt"/>
</dbReference>
<dbReference type="InterPro" id="IPR017118">
    <property type="entry name" value="Pept_S1A_matriptase-2"/>
</dbReference>
<dbReference type="InterPro" id="IPR009003">
    <property type="entry name" value="Peptidase_S1_PA"/>
</dbReference>
<dbReference type="InterPro" id="IPR043504">
    <property type="entry name" value="Peptidase_S1_PA_chymotrypsin"/>
</dbReference>
<dbReference type="InterPro" id="IPR001314">
    <property type="entry name" value="Peptidase_S1A"/>
</dbReference>
<dbReference type="InterPro" id="IPR000082">
    <property type="entry name" value="SEA_dom"/>
</dbReference>
<dbReference type="InterPro" id="IPR036364">
    <property type="entry name" value="SEA_dom_sf"/>
</dbReference>
<dbReference type="InterPro" id="IPR035914">
    <property type="entry name" value="Sperma_CUB_dom_sf"/>
</dbReference>
<dbReference type="InterPro" id="IPR001254">
    <property type="entry name" value="Trypsin_dom"/>
</dbReference>
<dbReference type="InterPro" id="IPR018114">
    <property type="entry name" value="TRYPSIN_HIS"/>
</dbReference>
<dbReference type="InterPro" id="IPR033116">
    <property type="entry name" value="TRYPSIN_SER"/>
</dbReference>
<dbReference type="PANTHER" id="PTHR24252">
    <property type="entry name" value="ACROSIN-RELATED"/>
    <property type="match status" value="1"/>
</dbReference>
<dbReference type="PANTHER" id="PTHR24252:SF20">
    <property type="entry name" value="LOW QUALITY PROTEIN: TRANSMEMBRANE PROTEASE SERINE 6"/>
    <property type="match status" value="1"/>
</dbReference>
<dbReference type="Pfam" id="PF00057">
    <property type="entry name" value="Ldl_recept_a"/>
    <property type="match status" value="2"/>
</dbReference>
<dbReference type="Pfam" id="PF01390">
    <property type="entry name" value="SEA"/>
    <property type="match status" value="1"/>
</dbReference>
<dbReference type="Pfam" id="PF00089">
    <property type="entry name" value="Trypsin"/>
    <property type="match status" value="1"/>
</dbReference>
<dbReference type="PIRSF" id="PIRSF037135">
    <property type="entry name" value="Matriptase-2"/>
    <property type="match status" value="1"/>
</dbReference>
<dbReference type="PRINTS" id="PR00722">
    <property type="entry name" value="CHYMOTRYPSIN"/>
</dbReference>
<dbReference type="SMART" id="SM00192">
    <property type="entry name" value="LDLa"/>
    <property type="match status" value="3"/>
</dbReference>
<dbReference type="SMART" id="SM00020">
    <property type="entry name" value="Tryp_SPc"/>
    <property type="match status" value="1"/>
</dbReference>
<dbReference type="SUPFAM" id="SSF57424">
    <property type="entry name" value="LDL receptor-like module"/>
    <property type="match status" value="3"/>
</dbReference>
<dbReference type="SUPFAM" id="SSF82671">
    <property type="entry name" value="SEA domain"/>
    <property type="match status" value="1"/>
</dbReference>
<dbReference type="SUPFAM" id="SSF49854">
    <property type="entry name" value="Spermadhesin, CUB domain"/>
    <property type="match status" value="2"/>
</dbReference>
<dbReference type="SUPFAM" id="SSF50494">
    <property type="entry name" value="Trypsin-like serine proteases"/>
    <property type="match status" value="1"/>
</dbReference>
<dbReference type="PROSITE" id="PS01180">
    <property type="entry name" value="CUB"/>
    <property type="match status" value="1"/>
</dbReference>
<dbReference type="PROSITE" id="PS01209">
    <property type="entry name" value="LDLRA_1"/>
    <property type="match status" value="2"/>
</dbReference>
<dbReference type="PROSITE" id="PS50068">
    <property type="entry name" value="LDLRA_2"/>
    <property type="match status" value="3"/>
</dbReference>
<dbReference type="PROSITE" id="PS50024">
    <property type="entry name" value="SEA"/>
    <property type="match status" value="1"/>
</dbReference>
<dbReference type="PROSITE" id="PS50240">
    <property type="entry name" value="TRYPSIN_DOM"/>
    <property type="match status" value="1"/>
</dbReference>
<dbReference type="PROSITE" id="PS00134">
    <property type="entry name" value="TRYPSIN_HIS"/>
    <property type="match status" value="1"/>
</dbReference>
<dbReference type="PROSITE" id="PS00135">
    <property type="entry name" value="TRYPSIN_SER"/>
    <property type="match status" value="1"/>
</dbReference>
<feature type="chain" id="PRO_0000088697" description="Transmembrane protease serine 6">
    <location>
        <begin position="1"/>
        <end position="811"/>
    </location>
</feature>
<feature type="topological domain" description="Cytoplasmic" evidence="3">
    <location>
        <begin position="1"/>
        <end position="59"/>
    </location>
</feature>
<feature type="transmembrane region" description="Helical; Signal-anchor for type II membrane protein" evidence="3">
    <location>
        <begin position="60"/>
        <end position="80"/>
    </location>
</feature>
<feature type="topological domain" description="Extracellular" evidence="3">
    <location>
        <begin position="81"/>
        <end position="811"/>
    </location>
</feature>
<feature type="domain" description="SEA" evidence="6">
    <location>
        <begin position="86"/>
        <end position="209"/>
    </location>
</feature>
<feature type="domain" description="CUB 1" evidence="4">
    <location>
        <begin position="213"/>
        <end position="336"/>
    </location>
</feature>
<feature type="domain" description="CUB 2" evidence="4">
    <location>
        <begin position="323"/>
        <end position="440"/>
    </location>
</feature>
<feature type="domain" description="LDL-receptor class A 1" evidence="5">
    <location>
        <begin position="445"/>
        <end position="477"/>
    </location>
</feature>
<feature type="domain" description="LDL-receptor class A 2" evidence="5">
    <location>
        <begin position="478"/>
        <end position="514"/>
    </location>
</feature>
<feature type="domain" description="LDL-receptor class A 3" evidence="5">
    <location>
        <begin position="518"/>
        <end position="555"/>
    </location>
</feature>
<feature type="domain" description="Peptidase S1" evidence="7">
    <location>
        <begin position="577"/>
        <end position="811"/>
    </location>
</feature>
<feature type="region of interest" description="Disordered" evidence="8">
    <location>
        <begin position="1"/>
        <end position="48"/>
    </location>
</feature>
<feature type="compositionally biased region" description="Polar residues" evidence="8">
    <location>
        <begin position="8"/>
        <end position="18"/>
    </location>
</feature>
<feature type="active site" description="Charge relay system" evidence="1">
    <location>
        <position position="617"/>
    </location>
</feature>
<feature type="active site" description="Charge relay system" evidence="1">
    <location>
        <position position="668"/>
    </location>
</feature>
<feature type="active site" description="Charge relay system" evidence="1">
    <location>
        <position position="762"/>
    </location>
</feature>
<feature type="glycosylation site" description="N-linked (GlcNAc...) asparagine" evidence="3">
    <location>
        <position position="138"/>
    </location>
</feature>
<feature type="glycosylation site" description="N-linked (GlcNAc...) asparagine" evidence="3">
    <location>
        <position position="184"/>
    </location>
</feature>
<feature type="glycosylation site" description="N-linked (GlcNAc...) asparagine" evidence="3">
    <location>
        <position position="216"/>
    </location>
</feature>
<feature type="glycosylation site" description="N-linked (GlcNAc...) asparagine" evidence="3">
    <location>
        <position position="338"/>
    </location>
</feature>
<feature type="glycosylation site" description="N-linked (GlcNAc...) asparagine" evidence="3">
    <location>
        <position position="433"/>
    </location>
</feature>
<feature type="glycosylation site" description="N-linked (GlcNAc...) asparagine" evidence="3">
    <location>
        <position position="453"/>
    </location>
</feature>
<feature type="glycosylation site" description="N-linked (GlcNAc...) asparagine" evidence="3">
    <location>
        <position position="518"/>
    </location>
</feature>
<feature type="disulfide bond" evidence="1">
    <location>
        <begin position="335"/>
        <end position="366"/>
    </location>
</feature>
<feature type="disulfide bond" evidence="1">
    <location>
        <begin position="458"/>
        <end position="470"/>
    </location>
</feature>
<feature type="disulfide bond" evidence="1">
    <location>
        <begin position="464"/>
        <end position="480"/>
    </location>
</feature>
<feature type="disulfide bond" evidence="1">
    <location>
        <begin position="474"/>
        <end position="489"/>
    </location>
</feature>
<feature type="disulfide bond" evidence="1">
    <location>
        <begin position="491"/>
        <end position="503"/>
    </location>
</feature>
<feature type="disulfide bond" evidence="1">
    <location>
        <begin position="497"/>
        <end position="516"/>
    </location>
</feature>
<feature type="disulfide bond" evidence="1">
    <location>
        <begin position="510"/>
        <end position="525"/>
    </location>
</feature>
<feature type="disulfide bond" evidence="1">
    <location>
        <begin position="531"/>
        <end position="543"/>
    </location>
</feature>
<feature type="disulfide bond" evidence="1">
    <location>
        <begin position="538"/>
        <end position="557"/>
    </location>
</feature>
<feature type="disulfide bond" evidence="1">
    <location>
        <begin position="551"/>
        <end position="566"/>
    </location>
</feature>
<feature type="disulfide bond" evidence="1">
    <location>
        <begin position="602"/>
        <end position="618"/>
    </location>
</feature>
<feature type="disulfide bond" evidence="1">
    <location>
        <begin position="702"/>
        <end position="768"/>
    </location>
</feature>
<feature type="disulfide bond" evidence="1">
    <location>
        <begin position="733"/>
        <end position="747"/>
    </location>
</feature>
<feature type="disulfide bond" evidence="1">
    <location>
        <begin position="758"/>
        <end position="787"/>
    </location>
</feature>
<feature type="splice variant" id="VSP_035564" description="In isoform 2." evidence="11">
    <original>DCGLQGLSSRIVGGTVSSEGEWPWQASL</original>
    <variation>AWPPRSCGPCSWERCGRTRAGQARCPSR</variation>
    <location>
        <begin position="567"/>
        <end position="594"/>
    </location>
</feature>
<feature type="splice variant" id="VSP_035565" description="In isoform 3." evidence="11">
    <original>DCGLQGLSSRIVGGT</original>
    <variation>GPLQPYCGRDRVLRG</variation>
    <location>
        <begin position="567"/>
        <end position="581"/>
    </location>
</feature>
<feature type="splice variant" id="VSP_035566" description="In isoform 3." evidence="11">
    <location>
        <begin position="582"/>
        <end position="811"/>
    </location>
</feature>
<feature type="splice variant" id="VSP_035567" description="In isoform 2." evidence="11">
    <location>
        <begin position="595"/>
        <end position="811"/>
    </location>
</feature>
<feature type="mutagenesis site" description="Protease-dead." evidence="10">
    <original>S</original>
    <variation>A</variation>
    <location>
        <position position="762"/>
    </location>
</feature>
<feature type="sequence conflict" description="In Ref. 3; BAB23684." evidence="12" ref="3">
    <original>P</original>
    <variation>PP</variation>
    <location>
        <position position="690"/>
    </location>
</feature>
<keyword id="KW-0025">Alternative splicing</keyword>
<keyword id="KW-1003">Cell membrane</keyword>
<keyword id="KW-1015">Disulfide bond</keyword>
<keyword id="KW-0325">Glycoprotein</keyword>
<keyword id="KW-0378">Hydrolase</keyword>
<keyword id="KW-0472">Membrane</keyword>
<keyword id="KW-0645">Protease</keyword>
<keyword id="KW-1185">Reference proteome</keyword>
<keyword id="KW-0677">Repeat</keyword>
<keyword id="KW-0720">Serine protease</keyword>
<keyword id="KW-0735">Signal-anchor</keyword>
<keyword id="KW-0812">Transmembrane</keyword>
<keyword id="KW-1133">Transmembrane helix</keyword>
<keyword id="KW-0865">Zymogen</keyword>
<name>TMPS6_MOUSE</name>
<proteinExistence type="evidence at protein level"/>
<comment type="function">
    <text evidence="10">Membrane-bound serine protease (PubMed:18451267). Through the cleavage of cell surface HJV, a regulator of the expression of the iron absorption-regulating hormone hepicidin/HAMP, plays a role in iron homeostasis (PubMed:18451267).</text>
</comment>
<comment type="subunit">
    <text evidence="2">Interacts with HJV.</text>
</comment>
<comment type="subcellular location">
    <subcellularLocation>
        <location evidence="9">Cell membrane</location>
        <topology evidence="9">Single-pass type II membrane protein</topology>
    </subcellularLocation>
    <text evidence="2">The processed, activated two-chains form is released in the extracellular space.</text>
</comment>
<comment type="alternative products">
    <event type="alternative splicing"/>
    <isoform>
        <id>Q9DBI0-1</id>
        <name>1</name>
        <sequence type="displayed"/>
    </isoform>
    <isoform>
        <id>Q9DBI0-2</id>
        <name>2</name>
        <sequence type="described" ref="VSP_035564 VSP_035567"/>
    </isoform>
    <isoform>
        <id>Q9DBI0-3</id>
        <name>3</name>
        <sequence type="described" ref="VSP_035565 VSP_035566"/>
    </isoform>
</comment>
<comment type="tissue specificity">
    <text evidence="9">Expressed at highest levels in adult mice liver, kidney and uterus. Also strongly expressed within the nasal cavity by olfactory epithelial cells. A weak, but detectable, signal in adult mice tissues analyzed including brain, lung, heart, kidney, spleen, muscle, intestine, thymus and pancreas. No signal in residual embryonic yolk sac, developing kidney tubules or in embryonic tissues analyzed including lung, heart, gastrointestinal tract and epithelium of the oral cavity.</text>
</comment>
<comment type="developmental stage">
    <text evidence="9">Expressed at higher levels from 12.5 dpc to 15.5 dpc with a peak at 13.5 dpc. Expressed in the developing liver and at lower levels in developing pharyngo-tympanic tubes.</text>
</comment>
<comment type="domain">
    <text evidence="10">Cytoplasmic domain mediates HAMP suppression via proximal promoter element(s).</text>
</comment>
<comment type="PTM">
    <text evidence="2">The single-chain zymogen undergoes autoproteolytic processing. This results in TMPRSS6 shedding from the cell surface and conversion into an activated two-chains form which is released extracellularly. The process involves a trans-activation mechanism that requires TMPRSS6 oligomerization.</text>
</comment>
<comment type="disruption phenotype">
    <text evidence="10">Mice display the phenotype named mask, characterized by progressive loss of body (but not facial) hair, microcytic anemia and female infertility, all reversible by dietary iron supplementation. The mask phenotype results from reduced absorption of dietary iron caused by high levels of hepcidin.</text>
</comment>
<comment type="similarity">
    <text evidence="7">Belongs to the peptidase S1 family.</text>
</comment>
<comment type="sequence caution" evidence="12">
    <conflict type="erroneous initiation">
        <sequence resource="EMBL-CDS" id="AAH57674"/>
    </conflict>
</comment>
<gene>
    <name type="primary">Tmprss6</name>
</gene>
<evidence type="ECO:0000250" key="1"/>
<evidence type="ECO:0000250" key="2">
    <source>
        <dbReference type="UniProtKB" id="Q8IU80"/>
    </source>
</evidence>
<evidence type="ECO:0000255" key="3"/>
<evidence type="ECO:0000255" key="4">
    <source>
        <dbReference type="PROSITE-ProRule" id="PRU00059"/>
    </source>
</evidence>
<evidence type="ECO:0000255" key="5">
    <source>
        <dbReference type="PROSITE-ProRule" id="PRU00124"/>
    </source>
</evidence>
<evidence type="ECO:0000255" key="6">
    <source>
        <dbReference type="PROSITE-ProRule" id="PRU00188"/>
    </source>
</evidence>
<evidence type="ECO:0000255" key="7">
    <source>
        <dbReference type="PROSITE-ProRule" id="PRU00274"/>
    </source>
</evidence>
<evidence type="ECO:0000256" key="8">
    <source>
        <dbReference type="SAM" id="MobiDB-lite"/>
    </source>
</evidence>
<evidence type="ECO:0000269" key="9">
    <source>
    </source>
</evidence>
<evidence type="ECO:0000269" key="10">
    <source>
    </source>
</evidence>
<evidence type="ECO:0000303" key="11">
    <source>
    </source>
</evidence>
<evidence type="ECO:0000305" key="12"/>
<organism>
    <name type="scientific">Mus musculus</name>
    <name type="common">Mouse</name>
    <dbReference type="NCBI Taxonomy" id="10090"/>
    <lineage>
        <taxon>Eukaryota</taxon>
        <taxon>Metazoa</taxon>
        <taxon>Chordata</taxon>
        <taxon>Craniata</taxon>
        <taxon>Vertebrata</taxon>
        <taxon>Euteleostomi</taxon>
        <taxon>Mammalia</taxon>
        <taxon>Eutheria</taxon>
        <taxon>Euarchontoglires</taxon>
        <taxon>Glires</taxon>
        <taxon>Rodentia</taxon>
        <taxon>Myomorpha</taxon>
        <taxon>Muroidea</taxon>
        <taxon>Muridae</taxon>
        <taxon>Murinae</taxon>
        <taxon>Mus</taxon>
        <taxon>Mus</taxon>
    </lineage>
</organism>
<protein>
    <recommendedName>
        <fullName>Transmembrane protease serine 6</fullName>
        <ecNumber>3.4.21.-</ecNumber>
    </recommendedName>
    <alternativeName>
        <fullName>Matriptase-2</fullName>
    </alternativeName>
</protein>
<reference key="1">
    <citation type="journal article" date="2003" name="Biochem. J.">
        <title>Mouse matriptase-2: identification, characterization and comparative mRNA expression analysis with mouse hepsin in adult and embryonic tissues.</title>
        <authorList>
            <person name="Hooper J.D."/>
            <person name="Campagnolo L."/>
            <person name="Goodarzi G."/>
            <person name="Truong T.N."/>
            <person name="Stuhlmann H."/>
            <person name="Quigley J.P."/>
        </authorList>
    </citation>
    <scope>NUCLEOTIDE SEQUENCE [MRNA] (ISOFORM 1)</scope>
    <scope>SUBCELLULAR LOCATION</scope>
    <scope>TISSUE SPECIFICITY</scope>
    <scope>DEVELOPMENTAL STAGE</scope>
    <source>
        <strain>C57BL/6J</strain>
        <tissue>Liver</tissue>
    </source>
</reference>
<reference key="2">
    <citation type="journal article" date="2008" name="Science">
        <title>The serine protease TMPRSS6 is required to sense iron deficiency.</title>
        <authorList>
            <person name="Du X."/>
            <person name="She E."/>
            <person name="Gelbart T."/>
            <person name="Truksa J."/>
            <person name="Lee P."/>
            <person name="Xia Y."/>
            <person name="Khovananth K."/>
            <person name="Mudd S."/>
            <person name="Mann N."/>
            <person name="Moresco E.M.Y."/>
            <person name="Beutler E."/>
            <person name="Beutler B."/>
        </authorList>
    </citation>
    <scope>NUCLEOTIDE SEQUENCE [MRNA] (ISOFORMS 2 AND 3)</scope>
    <scope>FUNCTION</scope>
    <scope>DOMAIN</scope>
    <scope>MUTAGENESIS OF SER-762</scope>
    <scope>DISRUPTION PHENOTYPE</scope>
    <source>
        <tissue>Liver</tissue>
    </source>
</reference>
<reference key="3">
    <citation type="journal article" date="2005" name="Science">
        <title>The transcriptional landscape of the mammalian genome.</title>
        <authorList>
            <person name="Carninci P."/>
            <person name="Kasukawa T."/>
            <person name="Katayama S."/>
            <person name="Gough J."/>
            <person name="Frith M.C."/>
            <person name="Maeda N."/>
            <person name="Oyama R."/>
            <person name="Ravasi T."/>
            <person name="Lenhard B."/>
            <person name="Wells C."/>
            <person name="Kodzius R."/>
            <person name="Shimokawa K."/>
            <person name="Bajic V.B."/>
            <person name="Brenner S.E."/>
            <person name="Batalov S."/>
            <person name="Forrest A.R."/>
            <person name="Zavolan M."/>
            <person name="Davis M.J."/>
            <person name="Wilming L.G."/>
            <person name="Aidinis V."/>
            <person name="Allen J.E."/>
            <person name="Ambesi-Impiombato A."/>
            <person name="Apweiler R."/>
            <person name="Aturaliya R.N."/>
            <person name="Bailey T.L."/>
            <person name="Bansal M."/>
            <person name="Baxter L."/>
            <person name="Beisel K.W."/>
            <person name="Bersano T."/>
            <person name="Bono H."/>
            <person name="Chalk A.M."/>
            <person name="Chiu K.P."/>
            <person name="Choudhary V."/>
            <person name="Christoffels A."/>
            <person name="Clutterbuck D.R."/>
            <person name="Crowe M.L."/>
            <person name="Dalla E."/>
            <person name="Dalrymple B.P."/>
            <person name="de Bono B."/>
            <person name="Della Gatta G."/>
            <person name="di Bernardo D."/>
            <person name="Down T."/>
            <person name="Engstrom P."/>
            <person name="Fagiolini M."/>
            <person name="Faulkner G."/>
            <person name="Fletcher C.F."/>
            <person name="Fukushima T."/>
            <person name="Furuno M."/>
            <person name="Futaki S."/>
            <person name="Gariboldi M."/>
            <person name="Georgii-Hemming P."/>
            <person name="Gingeras T.R."/>
            <person name="Gojobori T."/>
            <person name="Green R.E."/>
            <person name="Gustincich S."/>
            <person name="Harbers M."/>
            <person name="Hayashi Y."/>
            <person name="Hensch T.K."/>
            <person name="Hirokawa N."/>
            <person name="Hill D."/>
            <person name="Huminiecki L."/>
            <person name="Iacono M."/>
            <person name="Ikeo K."/>
            <person name="Iwama A."/>
            <person name="Ishikawa T."/>
            <person name="Jakt M."/>
            <person name="Kanapin A."/>
            <person name="Katoh M."/>
            <person name="Kawasawa Y."/>
            <person name="Kelso J."/>
            <person name="Kitamura H."/>
            <person name="Kitano H."/>
            <person name="Kollias G."/>
            <person name="Krishnan S.P."/>
            <person name="Kruger A."/>
            <person name="Kummerfeld S.K."/>
            <person name="Kurochkin I.V."/>
            <person name="Lareau L.F."/>
            <person name="Lazarevic D."/>
            <person name="Lipovich L."/>
            <person name="Liu J."/>
            <person name="Liuni S."/>
            <person name="McWilliam S."/>
            <person name="Madan Babu M."/>
            <person name="Madera M."/>
            <person name="Marchionni L."/>
            <person name="Matsuda H."/>
            <person name="Matsuzawa S."/>
            <person name="Miki H."/>
            <person name="Mignone F."/>
            <person name="Miyake S."/>
            <person name="Morris K."/>
            <person name="Mottagui-Tabar S."/>
            <person name="Mulder N."/>
            <person name="Nakano N."/>
            <person name="Nakauchi H."/>
            <person name="Ng P."/>
            <person name="Nilsson R."/>
            <person name="Nishiguchi S."/>
            <person name="Nishikawa S."/>
            <person name="Nori F."/>
            <person name="Ohara O."/>
            <person name="Okazaki Y."/>
            <person name="Orlando V."/>
            <person name="Pang K.C."/>
            <person name="Pavan W.J."/>
            <person name="Pavesi G."/>
            <person name="Pesole G."/>
            <person name="Petrovsky N."/>
            <person name="Piazza S."/>
            <person name="Reed J."/>
            <person name="Reid J.F."/>
            <person name="Ring B.Z."/>
            <person name="Ringwald M."/>
            <person name="Rost B."/>
            <person name="Ruan Y."/>
            <person name="Salzberg S.L."/>
            <person name="Sandelin A."/>
            <person name="Schneider C."/>
            <person name="Schoenbach C."/>
            <person name="Sekiguchi K."/>
            <person name="Semple C.A."/>
            <person name="Seno S."/>
            <person name="Sessa L."/>
            <person name="Sheng Y."/>
            <person name="Shibata Y."/>
            <person name="Shimada H."/>
            <person name="Shimada K."/>
            <person name="Silva D."/>
            <person name="Sinclair B."/>
            <person name="Sperling S."/>
            <person name="Stupka E."/>
            <person name="Sugiura K."/>
            <person name="Sultana R."/>
            <person name="Takenaka Y."/>
            <person name="Taki K."/>
            <person name="Tammoja K."/>
            <person name="Tan S.L."/>
            <person name="Tang S."/>
            <person name="Taylor M.S."/>
            <person name="Tegner J."/>
            <person name="Teichmann S.A."/>
            <person name="Ueda H.R."/>
            <person name="van Nimwegen E."/>
            <person name="Verardo R."/>
            <person name="Wei C.L."/>
            <person name="Yagi K."/>
            <person name="Yamanishi H."/>
            <person name="Zabarovsky E."/>
            <person name="Zhu S."/>
            <person name="Zimmer A."/>
            <person name="Hide W."/>
            <person name="Bult C."/>
            <person name="Grimmond S.M."/>
            <person name="Teasdale R.D."/>
            <person name="Liu E.T."/>
            <person name="Brusic V."/>
            <person name="Quackenbush J."/>
            <person name="Wahlestedt C."/>
            <person name="Mattick J.S."/>
            <person name="Hume D.A."/>
            <person name="Kai C."/>
            <person name="Sasaki D."/>
            <person name="Tomaru Y."/>
            <person name="Fukuda S."/>
            <person name="Kanamori-Katayama M."/>
            <person name="Suzuki M."/>
            <person name="Aoki J."/>
            <person name="Arakawa T."/>
            <person name="Iida J."/>
            <person name="Imamura K."/>
            <person name="Itoh M."/>
            <person name="Kato T."/>
            <person name="Kawaji H."/>
            <person name="Kawagashira N."/>
            <person name="Kawashima T."/>
            <person name="Kojima M."/>
            <person name="Kondo S."/>
            <person name="Konno H."/>
            <person name="Nakano K."/>
            <person name="Ninomiya N."/>
            <person name="Nishio T."/>
            <person name="Okada M."/>
            <person name="Plessy C."/>
            <person name="Shibata K."/>
            <person name="Shiraki T."/>
            <person name="Suzuki S."/>
            <person name="Tagami M."/>
            <person name="Waki K."/>
            <person name="Watahiki A."/>
            <person name="Okamura-Oho Y."/>
            <person name="Suzuki H."/>
            <person name="Kawai J."/>
            <person name="Hayashizaki Y."/>
        </authorList>
    </citation>
    <scope>NUCLEOTIDE SEQUENCE [LARGE SCALE MRNA] (ISOFORM 1)</scope>
    <source>
        <strain>C57BL/6J</strain>
        <tissue>Liver</tissue>
    </source>
</reference>
<reference key="4">
    <citation type="journal article" date="2009" name="PLoS Biol.">
        <title>Lineage-specific biology revealed by a finished genome assembly of the mouse.</title>
        <authorList>
            <person name="Church D.M."/>
            <person name="Goodstadt L."/>
            <person name="Hillier L.W."/>
            <person name="Zody M.C."/>
            <person name="Goldstein S."/>
            <person name="She X."/>
            <person name="Bult C.J."/>
            <person name="Agarwala R."/>
            <person name="Cherry J.L."/>
            <person name="DiCuccio M."/>
            <person name="Hlavina W."/>
            <person name="Kapustin Y."/>
            <person name="Meric P."/>
            <person name="Maglott D."/>
            <person name="Birtle Z."/>
            <person name="Marques A.C."/>
            <person name="Graves T."/>
            <person name="Zhou S."/>
            <person name="Teague B."/>
            <person name="Potamousis K."/>
            <person name="Churas C."/>
            <person name="Place M."/>
            <person name="Herschleb J."/>
            <person name="Runnheim R."/>
            <person name="Forrest D."/>
            <person name="Amos-Landgraf J."/>
            <person name="Schwartz D.C."/>
            <person name="Cheng Z."/>
            <person name="Lindblad-Toh K."/>
            <person name="Eichler E.E."/>
            <person name="Ponting C.P."/>
        </authorList>
    </citation>
    <scope>NUCLEOTIDE SEQUENCE [LARGE SCALE GENOMIC DNA]</scope>
    <source>
        <strain>C57BL/6J</strain>
    </source>
</reference>
<reference key="5">
    <citation type="journal article" date="2004" name="Genome Res.">
        <title>The status, quality, and expansion of the NIH full-length cDNA project: the Mammalian Gene Collection (MGC).</title>
        <authorList>
            <consortium name="The MGC Project Team"/>
        </authorList>
    </citation>
    <scope>NUCLEOTIDE SEQUENCE [LARGE SCALE MRNA] (ISOFORM 1)</scope>
    <source>
        <strain>FVB/N</strain>
        <tissue>Liver</tissue>
    </source>
</reference>
<reference key="6">
    <citation type="journal article" date="2003" name="Cancer Metastasis Rev.">
        <title>Membrane anchored serine proteases: a rapidly expanding group of cell surface proteolytic enzymes with potential roles in cancer.</title>
        <authorList>
            <person name="Netzel-Arnett S."/>
            <person name="Hooper J.D."/>
            <person name="Szabo R."/>
            <person name="Madison E.L."/>
            <person name="Quigley J.P."/>
            <person name="Bugge T.H."/>
            <person name="Antalis T.M."/>
        </authorList>
    </citation>
    <scope>REVIEW</scope>
</reference>
<reference key="7">
    <citation type="journal article" date="2008" name="Front. Biosci.">
        <title>The type II transmembrane serine protease matriptase-2 -- identification, structural features, enzymology, expression pattern and potential roles.</title>
        <authorList>
            <person name="Ramsay A.J."/>
            <person name="Reid J.C."/>
            <person name="Velasco G."/>
            <person name="Quigley J.P."/>
            <person name="Hooper J.D."/>
        </authorList>
    </citation>
    <scope>REVIEW</scope>
</reference>
<sequence>MPRCFQLPCSTRMPTTEVPQAADGQGDAGDGEEAAEPEGKFKPPKNTKRKNRDYVRFTPLLLVLAALVSAGVMLWYFLGYKAEVTVSQVYSGSLRVLNRHFSQDLGRRESIAFRSESAKAQKMLQELVASTRLGTYYNSSSVYSFGEGPLTCFFWFILDIPEYQRLTLSPEVVRELLVDELLSNSSTLASYKTEYEVDPEGLVILEASVNDIVVLNSTLGCYRYSYVNPGQVLPLKGPDQQTTSCLWHLQGPEDLMIKVRLEWTRVDCRDRVAMYDAAGPLEKRLITSVYGCSRQEPVMEVLASGSVMAVVWKKGMHSYYDPFLLSVKSVAFQDCQVNLTLEGRLDTQGFLRTPYYPSYYSPSTHCSWHLTVPSLDYGLALWFDAYALRRQKYNRLCTQGQWMIQNRRLCGFRTLQPYAERIPMVASDGVTINFTSQISLTGPGVQVYYSLYNQSDPCPGEFLCSVNGLCVPACDGIKDCPNGLDERNCVCRAMFQCQEDSTCISLPRVCDRQPDCLNGSDEEQCQEGVPCGTFTFQCEDRSCVKKPNPECDGQSDCRDGSDEQHCDCGLQGLSSRIVGGTVSSEGEWPWQASLQIRGRHICGGALIADRWVITAAHCFQEDSMASPKLWTVFLGKMRQNSRWPGEVSFKVSRLFLHPYHEEDSHDYDVALLQLDHPVVYSATVRPVCLPARSHFFEPGQHCWITGWGAQREGGPVSNTLQKVDVQLVPQDLCSEAYRYQVSPRMLCAGYRKGKKDACQGDSGGPLVCREPSGRWFLAGLVSWGLGCGRPNFFGVYTRVTRVINWIQQVLT</sequence>